<name>COX1_THEPA</name>
<evidence type="ECO:0000250" key="1">
    <source>
        <dbReference type="UniProtKB" id="P00396"/>
    </source>
</evidence>
<evidence type="ECO:0000250" key="2">
    <source>
        <dbReference type="UniProtKB" id="P00401"/>
    </source>
</evidence>
<evidence type="ECO:0000255" key="3"/>
<evidence type="ECO:0000305" key="4"/>
<gene>
    <name type="primary">MT-CO1</name>
    <name type="synonym">COI</name>
    <name type="synonym">COXI</name>
    <name type="synonym">MTCO1</name>
</gene>
<comment type="function">
    <text evidence="2">Component of the cytochrome c oxidase, the last enzyme in the mitochondrial electron transport chain which drives oxidative phosphorylation. The respiratory chain contains 3 multisubunit complexes succinate dehydrogenase (complex II, CII), ubiquinol-cytochrome c oxidoreductase (cytochrome b-c1 complex, complex III, CIII) and cytochrome c oxidase (complex IV, CIV), that cooperate to transfer electrons derived from NADH and succinate to molecular oxygen, creating an electrochemical gradient over the inner membrane that drives transmembrane transport and the ATP synthase. Cytochrome c oxidase is the component of the respiratory chain that catalyzes the reduction of oxygen to water. Electrons originating from reduced cytochrome c in the intermembrane space (IMS) are transferred via the dinuclear copper A center (CU(A)) of subunit 2 and heme A of subunit 1 to the active site in subunit 1, a binuclear center (BNC) formed by heme A3 and copper B (CU(B)). The BNC reduces molecular oxygen to 2 water molecules using 4 electrons from cytochrome c in the IMS and 4 protons from the mitochondrial matrix.</text>
</comment>
<comment type="catalytic activity">
    <reaction evidence="2">
        <text>4 Fe(II)-[cytochrome c] + O2 + 8 H(+)(in) = 4 Fe(III)-[cytochrome c] + 2 H2O + 4 H(+)(out)</text>
        <dbReference type="Rhea" id="RHEA:11436"/>
        <dbReference type="Rhea" id="RHEA-COMP:10350"/>
        <dbReference type="Rhea" id="RHEA-COMP:14399"/>
        <dbReference type="ChEBI" id="CHEBI:15377"/>
        <dbReference type="ChEBI" id="CHEBI:15378"/>
        <dbReference type="ChEBI" id="CHEBI:15379"/>
        <dbReference type="ChEBI" id="CHEBI:29033"/>
        <dbReference type="ChEBI" id="CHEBI:29034"/>
        <dbReference type="EC" id="7.1.1.9"/>
    </reaction>
    <physiologicalReaction direction="left-to-right" evidence="2">
        <dbReference type="Rhea" id="RHEA:11437"/>
    </physiologicalReaction>
</comment>
<comment type="cofactor">
    <cofactor evidence="2">
        <name>heme</name>
        <dbReference type="ChEBI" id="CHEBI:30413"/>
    </cofactor>
    <text evidence="2">Binds 2 heme A groups non-covalently per subunit.</text>
</comment>
<comment type="cofactor">
    <cofactor evidence="2">
        <name>Cu cation</name>
        <dbReference type="ChEBI" id="CHEBI:23378"/>
    </cofactor>
    <text evidence="2">Binds a copper B center.</text>
</comment>
<comment type="pathway">
    <text evidence="2">Energy metabolism; oxidative phosphorylation.</text>
</comment>
<comment type="subunit">
    <text evidence="2">Component of the cytochrome c oxidase (complex IV, CIV), a multisubunit enzyme composed of a catalytic core of 3 subunits and several supernumerary subunits. The complex exists as a monomer or a dimer and forms supercomplexes (SCs) in the inner mitochondrial membrane with ubiquinol-cytochrome c oxidoreductase (cytochrome b-c1 complex, complex III, CIII).</text>
</comment>
<comment type="subcellular location">
    <subcellularLocation>
        <location evidence="2">Mitochondrion inner membrane</location>
        <topology evidence="2">Multi-pass membrane protein</topology>
    </subcellularLocation>
</comment>
<comment type="similarity">
    <text evidence="4">Belongs to the heme-copper respiratory oxidase family.</text>
</comment>
<comment type="sequence caution" evidence="4">
    <conflict type="erroneous initiation">
        <sequence resource="EMBL-CDS" id="CAA80798"/>
    </conflict>
</comment>
<proteinExistence type="inferred from homology"/>
<keyword id="KW-0106">Calcium</keyword>
<keyword id="KW-0186">Copper</keyword>
<keyword id="KW-0249">Electron transport</keyword>
<keyword id="KW-0349">Heme</keyword>
<keyword id="KW-0408">Iron</keyword>
<keyword id="KW-0460">Magnesium</keyword>
<keyword id="KW-0472">Membrane</keyword>
<keyword id="KW-0479">Metal-binding</keyword>
<keyword id="KW-0496">Mitochondrion</keyword>
<keyword id="KW-0999">Mitochondrion inner membrane</keyword>
<keyword id="KW-0679">Respiratory chain</keyword>
<keyword id="KW-1278">Translocase</keyword>
<keyword id="KW-0812">Transmembrane</keyword>
<keyword id="KW-1133">Transmembrane helix</keyword>
<keyword id="KW-0813">Transport</keyword>
<organism>
    <name type="scientific">Theileria parva</name>
    <name type="common">East coast fever infection agent</name>
    <dbReference type="NCBI Taxonomy" id="5875"/>
    <lineage>
        <taxon>Eukaryota</taxon>
        <taxon>Sar</taxon>
        <taxon>Alveolata</taxon>
        <taxon>Apicomplexa</taxon>
        <taxon>Aconoidasida</taxon>
        <taxon>Piroplasmida</taxon>
        <taxon>Theileriidae</taxon>
        <taxon>Theileria</taxon>
    </lineage>
</organism>
<protein>
    <recommendedName>
        <fullName>Cytochrome c oxidase subunit 1</fullName>
        <ecNumber>7.1.1.9</ecNumber>
    </recommendedName>
    <alternativeName>
        <fullName>Cytochrome c oxidase polypeptide I</fullName>
    </alternativeName>
</protein>
<dbReference type="EC" id="7.1.1.9"/>
<dbReference type="EMBL" id="Z23263">
    <property type="protein sequence ID" value="CAA80798.1"/>
    <property type="status" value="ALT_INIT"/>
    <property type="molecule type" value="Genomic_DNA"/>
</dbReference>
<dbReference type="PIR" id="S41689">
    <property type="entry name" value="S41689"/>
</dbReference>
<dbReference type="RefSeq" id="YP_001994285.1">
    <property type="nucleotide sequence ID" value="NC_011005.1"/>
</dbReference>
<dbReference type="SMR" id="Q36097"/>
<dbReference type="FunCoup" id="Q36097">
    <property type="interactions" value="30"/>
</dbReference>
<dbReference type="STRING" id="5875.Q36097"/>
<dbReference type="GeneID" id="6741532"/>
<dbReference type="InParanoid" id="Q36097"/>
<dbReference type="UniPathway" id="UPA00705"/>
<dbReference type="GO" id="GO:0005743">
    <property type="term" value="C:mitochondrial inner membrane"/>
    <property type="evidence" value="ECO:0007669"/>
    <property type="project" value="UniProtKB-SubCell"/>
</dbReference>
<dbReference type="GO" id="GO:0045277">
    <property type="term" value="C:respiratory chain complex IV"/>
    <property type="evidence" value="ECO:0000250"/>
    <property type="project" value="UniProtKB"/>
</dbReference>
<dbReference type="GO" id="GO:0004129">
    <property type="term" value="F:cytochrome-c oxidase activity"/>
    <property type="evidence" value="ECO:0007669"/>
    <property type="project" value="UniProtKB-EC"/>
</dbReference>
<dbReference type="GO" id="GO:0020037">
    <property type="term" value="F:heme binding"/>
    <property type="evidence" value="ECO:0007669"/>
    <property type="project" value="InterPro"/>
</dbReference>
<dbReference type="GO" id="GO:0046872">
    <property type="term" value="F:metal ion binding"/>
    <property type="evidence" value="ECO:0007669"/>
    <property type="project" value="UniProtKB-KW"/>
</dbReference>
<dbReference type="GO" id="GO:0015990">
    <property type="term" value="P:electron transport coupled proton transport"/>
    <property type="evidence" value="ECO:0007669"/>
    <property type="project" value="TreeGrafter"/>
</dbReference>
<dbReference type="GO" id="GO:0006123">
    <property type="term" value="P:mitochondrial electron transport, cytochrome c to oxygen"/>
    <property type="evidence" value="ECO:0007669"/>
    <property type="project" value="TreeGrafter"/>
</dbReference>
<dbReference type="Gene3D" id="1.20.210.10">
    <property type="entry name" value="Cytochrome c oxidase-like, subunit I domain"/>
    <property type="match status" value="1"/>
</dbReference>
<dbReference type="InterPro" id="IPR023616">
    <property type="entry name" value="Cyt_c_oxase-like_su1_dom"/>
</dbReference>
<dbReference type="InterPro" id="IPR036927">
    <property type="entry name" value="Cyt_c_oxase-like_su1_sf"/>
</dbReference>
<dbReference type="InterPro" id="IPR000883">
    <property type="entry name" value="Cyt_C_Oxase_1"/>
</dbReference>
<dbReference type="PANTHER" id="PTHR10422">
    <property type="entry name" value="CYTOCHROME C OXIDASE SUBUNIT 1"/>
    <property type="match status" value="1"/>
</dbReference>
<dbReference type="PANTHER" id="PTHR10422:SF18">
    <property type="entry name" value="CYTOCHROME C OXIDASE SUBUNIT 1"/>
    <property type="match status" value="1"/>
</dbReference>
<dbReference type="Pfam" id="PF00115">
    <property type="entry name" value="COX1"/>
    <property type="match status" value="1"/>
</dbReference>
<dbReference type="PRINTS" id="PR01165">
    <property type="entry name" value="CYCOXIDASEI"/>
</dbReference>
<dbReference type="SUPFAM" id="SSF81442">
    <property type="entry name" value="Cytochrome c oxidase subunit I-like"/>
    <property type="match status" value="1"/>
</dbReference>
<dbReference type="PROSITE" id="PS50855">
    <property type="entry name" value="COX1"/>
    <property type="match status" value="1"/>
</dbReference>
<sequence>MKFEGLFLVFNSVSGNHKIIGISYLWLAYWFGMIGFYMSVLIRTELSMSGLKIITMDTLEIYNLLFTLHGLIMVFFNIMTGLFGGIGNYLYPVLLGYCDVVYPRVNLYSLLFQPIGFVLVVSSIYLEIGSGTGWTLYPPLSTSLSNVGIDFIIFGLLAAGIASTLSSVNFITTFTSVKTIGFVIDRISPAAWSIVLTSFLLLLSLPVVTAVFLMVFLDRHYNTMFFESSNSGDPVLYQHLFWFFGHPEVYIMILPGFGIISLLLSTYTTKEMFGNQTMILAMGFNSFVRLFGLGTSYVHIRFGSRYSRYFTTVTILIALPTGNKIFNWVTTLQCVESIKSLGLVLFTVLFIVNFVIGGTTGVVLGNAGIDLALHDTVYVVGHFHFVLSIGAIISMICFIIYIQRMLLFGIILSNRLSSLIAPIFMISVLLTFLPMHFTGFSPLPRRIPDYPDEMWGWNFICTLGATMMLVLKLAILFIISL</sequence>
<reference key="1">
    <citation type="journal article" date="1994" name="EMBO J.">
        <title>A 7.1 kb linear DNA molecule of Theileria parva has scrambled rDNA sequences and open reading frames for mitochondrially-encoded proteins.</title>
        <authorList>
            <person name="Kairo A."/>
            <person name="Fairlamb A."/>
            <person name="Gobright E."/>
            <person name="Nene V."/>
        </authorList>
    </citation>
    <scope>NUCLEOTIDE SEQUENCE [LARGE SCALE GENOMIC DNA]</scope>
    <source>
        <strain>Muguga</strain>
    </source>
</reference>
<geneLocation type="mitochondrion"/>
<accession>Q36097</accession>
<feature type="chain" id="PRO_0000232688" description="Cytochrome c oxidase subunit 1">
    <location>
        <begin position="1"/>
        <end position="481"/>
    </location>
</feature>
<feature type="transmembrane region" description="Helical" evidence="3">
    <location>
        <begin position="22"/>
        <end position="42"/>
    </location>
</feature>
<feature type="transmembrane region" description="Helical" evidence="3">
    <location>
        <begin position="64"/>
        <end position="84"/>
    </location>
</feature>
<feature type="transmembrane region" description="Helical" evidence="3">
    <location>
        <begin position="109"/>
        <end position="129"/>
    </location>
</feature>
<feature type="transmembrane region" description="Helical" evidence="3">
    <location>
        <begin position="151"/>
        <end position="171"/>
    </location>
</feature>
<feature type="transmembrane region" description="Helical" evidence="3">
    <location>
        <begin position="194"/>
        <end position="214"/>
    </location>
</feature>
<feature type="transmembrane region" description="Helical" evidence="3">
    <location>
        <begin position="240"/>
        <end position="260"/>
    </location>
</feature>
<feature type="transmembrane region" description="Helical" evidence="3">
    <location>
        <begin position="278"/>
        <end position="298"/>
    </location>
</feature>
<feature type="transmembrane region" description="Helical" evidence="3">
    <location>
        <begin position="309"/>
        <end position="329"/>
    </location>
</feature>
<feature type="transmembrane region" description="Helical" evidence="3">
    <location>
        <begin position="343"/>
        <end position="363"/>
    </location>
</feature>
<feature type="transmembrane region" description="Helical" evidence="3">
    <location>
        <begin position="382"/>
        <end position="402"/>
    </location>
</feature>
<feature type="transmembrane region" description="Helical" evidence="3">
    <location>
        <begin position="420"/>
        <end position="440"/>
    </location>
</feature>
<feature type="transmembrane region" description="Helical" evidence="3">
    <location>
        <begin position="459"/>
        <end position="479"/>
    </location>
</feature>
<feature type="binding site" evidence="2">
    <location>
        <position position="45"/>
    </location>
    <ligand>
        <name>Ca(2+)</name>
        <dbReference type="ChEBI" id="CHEBI:29108"/>
    </ligand>
</feature>
<feature type="binding site" evidence="2">
    <location>
        <position position="50"/>
    </location>
    <ligand>
        <name>Ca(2+)</name>
        <dbReference type="ChEBI" id="CHEBI:29108"/>
    </ligand>
</feature>
<feature type="binding site" description="axial binding residue" evidence="2">
    <location>
        <position position="69"/>
    </location>
    <ligand>
        <name>Fe(II)-heme a</name>
        <dbReference type="ChEBI" id="CHEBI:61715"/>
        <note>low-spin</note>
    </ligand>
    <ligandPart>
        <name>Fe</name>
        <dbReference type="ChEBI" id="CHEBI:18248"/>
    </ligandPart>
</feature>
<feature type="binding site" evidence="2">
    <location>
        <position position="246"/>
    </location>
    <ligand>
        <name>Cu cation</name>
        <dbReference type="ChEBI" id="CHEBI:23378"/>
        <label>B</label>
    </ligand>
</feature>
<feature type="binding site" evidence="1">
    <location>
        <position position="250"/>
    </location>
    <ligand>
        <name>O2</name>
        <dbReference type="ChEBI" id="CHEBI:15379"/>
    </ligand>
</feature>
<feature type="binding site" evidence="2">
    <location>
        <position position="374"/>
    </location>
    <ligand>
        <name>Mg(2+)</name>
        <dbReference type="ChEBI" id="CHEBI:18420"/>
        <note>ligand shared with subunit 2</note>
    </ligand>
</feature>
<feature type="binding site" evidence="2">
    <location>
        <position position="375"/>
    </location>
    <ligand>
        <name>Mg(2+)</name>
        <dbReference type="ChEBI" id="CHEBI:18420"/>
        <note>ligand shared with subunit 2</note>
    </ligand>
</feature>
<feature type="binding site" description="axial binding residue" evidence="2">
    <location>
        <position position="382"/>
    </location>
    <ligand>
        <name>heme a3</name>
        <dbReference type="ChEBI" id="CHEBI:83282"/>
        <note>high-spin</note>
    </ligand>
    <ligandPart>
        <name>Fe</name>
        <dbReference type="ChEBI" id="CHEBI:18248"/>
    </ligandPart>
</feature>
<feature type="binding site" description="axial binding residue" evidence="2">
    <location>
        <position position="384"/>
    </location>
    <ligand>
        <name>Fe(II)-heme a</name>
        <dbReference type="ChEBI" id="CHEBI:61715"/>
        <note>low-spin</note>
    </ligand>
    <ligandPart>
        <name>Fe</name>
        <dbReference type="ChEBI" id="CHEBI:18248"/>
    </ligandPart>
</feature>
<feature type="binding site" evidence="2">
    <location>
        <position position="448"/>
    </location>
    <ligand>
        <name>Ca(2+)</name>
        <dbReference type="ChEBI" id="CHEBI:29108"/>
    </ligand>
</feature>
<feature type="cross-link" description="1'-histidyl-3'-tyrosine (His-Tyr)" evidence="2">
    <location>
        <begin position="246"/>
        <end position="250"/>
    </location>
</feature>